<keyword id="KW-0963">Cytoplasm</keyword>
<keyword id="KW-0227">DNA damage</keyword>
<keyword id="KW-0234">DNA repair</keyword>
<keyword id="KW-0378">Hydrolase</keyword>
<accession>A6L7T5</accession>
<comment type="function">
    <text evidence="1">Excises uracil residues from the DNA which can arise as a result of misincorporation of dUMP residues by DNA polymerase or due to deamination of cytosine.</text>
</comment>
<comment type="catalytic activity">
    <reaction evidence="1">
        <text>Hydrolyzes single-stranded DNA or mismatched double-stranded DNA and polynucleotides, releasing free uracil.</text>
        <dbReference type="EC" id="3.2.2.27"/>
    </reaction>
</comment>
<comment type="subcellular location">
    <subcellularLocation>
        <location evidence="1">Cytoplasm</location>
    </subcellularLocation>
</comment>
<comment type="similarity">
    <text evidence="1">Belongs to the uracil-DNA glycosylase (UDG) superfamily. UNG family.</text>
</comment>
<reference key="1">
    <citation type="journal article" date="2007" name="PLoS Biol.">
        <title>Evolution of symbiotic bacteria in the distal human intestine.</title>
        <authorList>
            <person name="Xu J."/>
            <person name="Mahowald M.A."/>
            <person name="Ley R.E."/>
            <person name="Lozupone C.A."/>
            <person name="Hamady M."/>
            <person name="Martens E.C."/>
            <person name="Henrissat B."/>
            <person name="Coutinho P.M."/>
            <person name="Minx P."/>
            <person name="Latreille P."/>
            <person name="Cordum H."/>
            <person name="Van Brunt A."/>
            <person name="Kim K."/>
            <person name="Fulton R.S."/>
            <person name="Fulton L.A."/>
            <person name="Clifton S.W."/>
            <person name="Wilson R.K."/>
            <person name="Knight R.D."/>
            <person name="Gordon J.I."/>
        </authorList>
    </citation>
    <scope>NUCLEOTIDE SEQUENCE [LARGE SCALE GENOMIC DNA]</scope>
    <source>
        <strain>ATCC 8482 / DSM 1447 / JCM 5826 / CCUG 4940 / NBRC 14291 / NCTC 11154</strain>
    </source>
</reference>
<organism>
    <name type="scientific">Phocaeicola vulgatus (strain ATCC 8482 / DSM 1447 / JCM 5826 / CCUG 4940 / NBRC 14291 / NCTC 11154)</name>
    <name type="common">Bacteroides vulgatus</name>
    <dbReference type="NCBI Taxonomy" id="435590"/>
    <lineage>
        <taxon>Bacteria</taxon>
        <taxon>Pseudomonadati</taxon>
        <taxon>Bacteroidota</taxon>
        <taxon>Bacteroidia</taxon>
        <taxon>Bacteroidales</taxon>
        <taxon>Bacteroidaceae</taxon>
        <taxon>Phocaeicola</taxon>
    </lineage>
</organism>
<proteinExistence type="inferred from homology"/>
<feature type="chain" id="PRO_1000009867" description="Uracil-DNA glycosylase">
    <location>
        <begin position="1"/>
        <end position="220"/>
    </location>
</feature>
<feature type="active site" description="Proton acceptor" evidence="1">
    <location>
        <position position="65"/>
    </location>
</feature>
<sequence>MNVQIEESWKQHLAPEFEKDYFIRLTEFVRSEYQTATIYPPGRFIFNAFNLCPFDKVKVVIIGQDPYHGPGQAHGLCFSVNDGVPFPPSLQNIFKEIQSDLGAPIPTSGNLTRWANQGVLLLNATLTVRAHQAGSHQRRGWEEFTDAAIRVLAEQRENIVFILWGSYAQKKGAFIDRNKHLVLASAHPSPLSAYNGFFGNKHFSRTNEYLQAHGQTPIEW</sequence>
<gene>
    <name evidence="1" type="primary">ung</name>
    <name type="ordered locus">BVU_4148</name>
</gene>
<dbReference type="EC" id="3.2.2.27" evidence="1"/>
<dbReference type="EMBL" id="CP000139">
    <property type="protein sequence ID" value="ABR41749.1"/>
    <property type="molecule type" value="Genomic_DNA"/>
</dbReference>
<dbReference type="RefSeq" id="WP_005840435.1">
    <property type="nucleotide sequence ID" value="NZ_JANSWM010000087.1"/>
</dbReference>
<dbReference type="SMR" id="A6L7T5"/>
<dbReference type="STRING" id="435590.BVU_4148"/>
<dbReference type="PaxDb" id="435590-BVU_4148"/>
<dbReference type="GeneID" id="5305107"/>
<dbReference type="KEGG" id="bvu:BVU_4148"/>
<dbReference type="eggNOG" id="COG0692">
    <property type="taxonomic scope" value="Bacteria"/>
</dbReference>
<dbReference type="HOGENOM" id="CLU_032162_3_0_10"/>
<dbReference type="BioCyc" id="BVUL435590:G1G59-4286-MONOMER"/>
<dbReference type="Proteomes" id="UP000002861">
    <property type="component" value="Chromosome"/>
</dbReference>
<dbReference type="GO" id="GO:0005737">
    <property type="term" value="C:cytoplasm"/>
    <property type="evidence" value="ECO:0007669"/>
    <property type="project" value="UniProtKB-SubCell"/>
</dbReference>
<dbReference type="GO" id="GO:0004844">
    <property type="term" value="F:uracil DNA N-glycosylase activity"/>
    <property type="evidence" value="ECO:0007669"/>
    <property type="project" value="UniProtKB-UniRule"/>
</dbReference>
<dbReference type="GO" id="GO:0097510">
    <property type="term" value="P:base-excision repair, AP site formation via deaminated base removal"/>
    <property type="evidence" value="ECO:0007669"/>
    <property type="project" value="TreeGrafter"/>
</dbReference>
<dbReference type="CDD" id="cd10027">
    <property type="entry name" value="UDG-F1-like"/>
    <property type="match status" value="1"/>
</dbReference>
<dbReference type="FunFam" id="3.40.470.10:FF:000001">
    <property type="entry name" value="Uracil-DNA glycosylase"/>
    <property type="match status" value="1"/>
</dbReference>
<dbReference type="Gene3D" id="3.40.470.10">
    <property type="entry name" value="Uracil-DNA glycosylase-like domain"/>
    <property type="match status" value="1"/>
</dbReference>
<dbReference type="HAMAP" id="MF_00148">
    <property type="entry name" value="UDG"/>
    <property type="match status" value="1"/>
</dbReference>
<dbReference type="InterPro" id="IPR002043">
    <property type="entry name" value="UDG_fam1"/>
</dbReference>
<dbReference type="InterPro" id="IPR018085">
    <property type="entry name" value="Ura-DNA_Glyclase_AS"/>
</dbReference>
<dbReference type="InterPro" id="IPR005122">
    <property type="entry name" value="Uracil-DNA_glycosylase-like"/>
</dbReference>
<dbReference type="InterPro" id="IPR036895">
    <property type="entry name" value="Uracil-DNA_glycosylase-like_sf"/>
</dbReference>
<dbReference type="NCBIfam" id="NF003588">
    <property type="entry name" value="PRK05254.1-1"/>
    <property type="match status" value="1"/>
</dbReference>
<dbReference type="NCBIfam" id="NF003589">
    <property type="entry name" value="PRK05254.1-2"/>
    <property type="match status" value="1"/>
</dbReference>
<dbReference type="NCBIfam" id="NF003591">
    <property type="entry name" value="PRK05254.1-4"/>
    <property type="match status" value="1"/>
</dbReference>
<dbReference type="NCBIfam" id="NF003592">
    <property type="entry name" value="PRK05254.1-5"/>
    <property type="match status" value="1"/>
</dbReference>
<dbReference type="NCBIfam" id="TIGR00628">
    <property type="entry name" value="ung"/>
    <property type="match status" value="1"/>
</dbReference>
<dbReference type="PANTHER" id="PTHR11264">
    <property type="entry name" value="URACIL-DNA GLYCOSYLASE"/>
    <property type="match status" value="1"/>
</dbReference>
<dbReference type="PANTHER" id="PTHR11264:SF0">
    <property type="entry name" value="URACIL-DNA GLYCOSYLASE"/>
    <property type="match status" value="1"/>
</dbReference>
<dbReference type="Pfam" id="PF03167">
    <property type="entry name" value="UDG"/>
    <property type="match status" value="1"/>
</dbReference>
<dbReference type="SMART" id="SM00986">
    <property type="entry name" value="UDG"/>
    <property type="match status" value="1"/>
</dbReference>
<dbReference type="SMART" id="SM00987">
    <property type="entry name" value="UreE_C"/>
    <property type="match status" value="1"/>
</dbReference>
<dbReference type="SUPFAM" id="SSF52141">
    <property type="entry name" value="Uracil-DNA glycosylase-like"/>
    <property type="match status" value="1"/>
</dbReference>
<dbReference type="PROSITE" id="PS00130">
    <property type="entry name" value="U_DNA_GLYCOSYLASE"/>
    <property type="match status" value="1"/>
</dbReference>
<protein>
    <recommendedName>
        <fullName evidence="1">Uracil-DNA glycosylase</fullName>
        <shortName evidence="1">UDG</shortName>
        <ecNumber evidence="1">3.2.2.27</ecNumber>
    </recommendedName>
</protein>
<evidence type="ECO:0000255" key="1">
    <source>
        <dbReference type="HAMAP-Rule" id="MF_00148"/>
    </source>
</evidence>
<name>UNG_PHOV8</name>